<organism>
    <name type="scientific">Cereibacter sphaeroides (strain KD131 / KCTC 12085)</name>
    <name type="common">Rhodobacter sphaeroides</name>
    <dbReference type="NCBI Taxonomy" id="557760"/>
    <lineage>
        <taxon>Bacteria</taxon>
        <taxon>Pseudomonadati</taxon>
        <taxon>Pseudomonadota</taxon>
        <taxon>Alphaproteobacteria</taxon>
        <taxon>Rhodobacterales</taxon>
        <taxon>Paracoccaceae</taxon>
        <taxon>Cereibacter</taxon>
    </lineage>
</organism>
<comment type="function">
    <text evidence="1">This protein binds specifically to 23S rRNA; its binding is stimulated by other ribosomal proteins, e.g. L4, L17, and L20. It is important during the early stages of 50S assembly. It makes multiple contacts with different domains of the 23S rRNA in the assembled 50S subunit and ribosome (By similarity).</text>
</comment>
<comment type="function">
    <text evidence="1">The globular domain of the protein is located near the polypeptide exit tunnel on the outside of the subunit, while an extended beta-hairpin is found that lines the wall of the exit tunnel in the center of the 70S ribosome.</text>
</comment>
<comment type="subunit">
    <text evidence="1">Part of the 50S ribosomal subunit.</text>
</comment>
<comment type="similarity">
    <text evidence="1">Belongs to the universal ribosomal protein uL22 family.</text>
</comment>
<proteinExistence type="inferred from homology"/>
<accession>B9KL96</accession>
<feature type="chain" id="PRO_1000166080" description="Large ribosomal subunit protein uL22">
    <location>
        <begin position="1"/>
        <end position="126"/>
    </location>
</feature>
<name>RL22_CERSK</name>
<gene>
    <name evidence="1" type="primary">rplV</name>
    <name type="ordered locus">RSKD131_0019</name>
</gene>
<evidence type="ECO:0000255" key="1">
    <source>
        <dbReference type="HAMAP-Rule" id="MF_01331"/>
    </source>
</evidence>
<evidence type="ECO:0000305" key="2"/>
<keyword id="KW-0687">Ribonucleoprotein</keyword>
<keyword id="KW-0689">Ribosomal protein</keyword>
<keyword id="KW-0694">RNA-binding</keyword>
<keyword id="KW-0699">rRNA-binding</keyword>
<dbReference type="EMBL" id="CP001150">
    <property type="protein sequence ID" value="ACL99878.1"/>
    <property type="molecule type" value="Genomic_DNA"/>
</dbReference>
<dbReference type="RefSeq" id="WP_002722497.1">
    <property type="nucleotide sequence ID" value="NC_011963.1"/>
</dbReference>
<dbReference type="SMR" id="B9KL96"/>
<dbReference type="GeneID" id="67445505"/>
<dbReference type="KEGG" id="rsk:RSKD131_0019"/>
<dbReference type="HOGENOM" id="CLU_083987_3_0_5"/>
<dbReference type="GO" id="GO:0022625">
    <property type="term" value="C:cytosolic large ribosomal subunit"/>
    <property type="evidence" value="ECO:0007669"/>
    <property type="project" value="TreeGrafter"/>
</dbReference>
<dbReference type="GO" id="GO:0019843">
    <property type="term" value="F:rRNA binding"/>
    <property type="evidence" value="ECO:0007669"/>
    <property type="project" value="UniProtKB-UniRule"/>
</dbReference>
<dbReference type="GO" id="GO:0003735">
    <property type="term" value="F:structural constituent of ribosome"/>
    <property type="evidence" value="ECO:0007669"/>
    <property type="project" value="InterPro"/>
</dbReference>
<dbReference type="GO" id="GO:0006412">
    <property type="term" value="P:translation"/>
    <property type="evidence" value="ECO:0007669"/>
    <property type="project" value="UniProtKB-UniRule"/>
</dbReference>
<dbReference type="CDD" id="cd00336">
    <property type="entry name" value="Ribosomal_L22"/>
    <property type="match status" value="1"/>
</dbReference>
<dbReference type="Gene3D" id="3.90.470.10">
    <property type="entry name" value="Ribosomal protein L22/L17"/>
    <property type="match status" value="1"/>
</dbReference>
<dbReference type="HAMAP" id="MF_01331_B">
    <property type="entry name" value="Ribosomal_uL22_B"/>
    <property type="match status" value="1"/>
</dbReference>
<dbReference type="InterPro" id="IPR001063">
    <property type="entry name" value="Ribosomal_uL22"/>
</dbReference>
<dbReference type="InterPro" id="IPR005727">
    <property type="entry name" value="Ribosomal_uL22_bac/chlpt-type"/>
</dbReference>
<dbReference type="InterPro" id="IPR047867">
    <property type="entry name" value="Ribosomal_uL22_bac/org-type"/>
</dbReference>
<dbReference type="InterPro" id="IPR036394">
    <property type="entry name" value="Ribosomal_uL22_sf"/>
</dbReference>
<dbReference type="NCBIfam" id="TIGR01044">
    <property type="entry name" value="rplV_bact"/>
    <property type="match status" value="1"/>
</dbReference>
<dbReference type="PANTHER" id="PTHR13501">
    <property type="entry name" value="CHLOROPLAST 50S RIBOSOMAL PROTEIN L22-RELATED"/>
    <property type="match status" value="1"/>
</dbReference>
<dbReference type="PANTHER" id="PTHR13501:SF8">
    <property type="entry name" value="LARGE RIBOSOMAL SUBUNIT PROTEIN UL22M"/>
    <property type="match status" value="1"/>
</dbReference>
<dbReference type="Pfam" id="PF00237">
    <property type="entry name" value="Ribosomal_L22"/>
    <property type="match status" value="1"/>
</dbReference>
<dbReference type="SUPFAM" id="SSF54843">
    <property type="entry name" value="Ribosomal protein L22"/>
    <property type="match status" value="1"/>
</dbReference>
<reference key="1">
    <citation type="journal article" date="2009" name="J. Bacteriol.">
        <title>Complete genome sequence of Rhodobacter sphaeroides KD131.</title>
        <authorList>
            <person name="Lim S.-K."/>
            <person name="Kim S.J."/>
            <person name="Cha S.H."/>
            <person name="Oh Y.-K."/>
            <person name="Rhee H.-J."/>
            <person name="Kim M.-S."/>
            <person name="Lee J.K."/>
        </authorList>
    </citation>
    <scope>NUCLEOTIDE SEQUENCE [LARGE SCALE GENOMIC DNA]</scope>
    <source>
        <strain>KD131 / KCTC 12085</strain>
    </source>
</reference>
<protein>
    <recommendedName>
        <fullName evidence="1">Large ribosomal subunit protein uL22</fullName>
    </recommendedName>
    <alternativeName>
        <fullName evidence="2">50S ribosomal protein L22</fullName>
    </alternativeName>
</protein>
<sequence length="126" mass="13978">MGKEKNPRRVGENEAFAKVKMLRTSPQKLNLVAALIRGKKVDKAIADLTFSKKRISQDVLKCLQSAIANAENNHGLDVDELVVSEAFCGKNLVMKRGRPRARGRFGKIMKPFSELTIKVKQVGETA</sequence>